<protein>
    <recommendedName>
        <fullName evidence="4">Antibacterial effector protein Tle3</fullName>
    </recommendedName>
    <alternativeName>
        <fullName evidence="3">Antibacterial toxin Tle3</fullName>
    </alternativeName>
    <alternativeName>
        <fullName evidence="4">Type VI lipase effector Tle3</fullName>
    </alternativeName>
</protein>
<evidence type="ECO:0000256" key="1">
    <source>
        <dbReference type="SAM" id="MobiDB-lite"/>
    </source>
</evidence>
<evidence type="ECO:0000269" key="2">
    <source>
    </source>
</evidence>
<evidence type="ECO:0000303" key="3">
    <source>
    </source>
</evidence>
<evidence type="ECO:0000305" key="4"/>
<evidence type="ECO:0000312" key="5">
    <source>
        <dbReference type="EMBL" id="AAG03649.1"/>
    </source>
</evidence>
<name>TLE3_PSEAE</name>
<organism>
    <name type="scientific">Pseudomonas aeruginosa (strain ATCC 15692 / DSM 22644 / CIP 104116 / JCM 14847 / LMG 12228 / 1C / PRS 101 / PAO1)</name>
    <dbReference type="NCBI Taxonomy" id="208964"/>
    <lineage>
        <taxon>Bacteria</taxon>
        <taxon>Pseudomonadati</taxon>
        <taxon>Pseudomonadota</taxon>
        <taxon>Gammaproteobacteria</taxon>
        <taxon>Pseudomonadales</taxon>
        <taxon>Pseudomonadaceae</taxon>
        <taxon>Pseudomonas</taxon>
    </lineage>
</organism>
<reference key="1">
    <citation type="journal article" date="2000" name="Nature">
        <title>Complete genome sequence of Pseudomonas aeruginosa PAO1, an opportunistic pathogen.</title>
        <authorList>
            <person name="Stover C.K."/>
            <person name="Pham X.-Q.T."/>
            <person name="Erwin A.L."/>
            <person name="Mizoguchi S.D."/>
            <person name="Warrener P."/>
            <person name="Hickey M.J."/>
            <person name="Brinkman F.S.L."/>
            <person name="Hufnagle W.O."/>
            <person name="Kowalik D.J."/>
            <person name="Lagrou M."/>
            <person name="Garber R.L."/>
            <person name="Goltry L."/>
            <person name="Tolentino E."/>
            <person name="Westbrock-Wadman S."/>
            <person name="Yuan Y."/>
            <person name="Brody L.L."/>
            <person name="Coulter S.N."/>
            <person name="Folger K.R."/>
            <person name="Kas A."/>
            <person name="Larbig K."/>
            <person name="Lim R.M."/>
            <person name="Smith K.A."/>
            <person name="Spencer D.H."/>
            <person name="Wong G.K.-S."/>
            <person name="Wu Z."/>
            <person name="Paulsen I.T."/>
            <person name="Reizer J."/>
            <person name="Saier M.H. Jr."/>
            <person name="Hancock R.E.W."/>
            <person name="Lory S."/>
            <person name="Olson M.V."/>
        </authorList>
    </citation>
    <scope>NUCLEOTIDE SEQUENCE [LARGE SCALE GENOMIC DNA]</scope>
    <source>
        <strain>ATCC 15692 / DSM 22644 / CIP 104116 / JCM 14847 / LMG 12228 / 1C / PRS 101 / PAO1</strain>
    </source>
</reference>
<reference key="2">
    <citation type="journal article" date="2019" name="Front. Microbiol.">
        <title>A Type VI Secretion System Trans-Kingdom Effector Is Required for the Delivery of a Novel Antibacterial Toxin in Pseudomonas aeruginosa.</title>
        <authorList>
            <person name="Berni B."/>
            <person name="Soscia C."/>
            <person name="Djermoun S."/>
            <person name="Ize B."/>
            <person name="Bleves S."/>
        </authorList>
    </citation>
    <scope>FUNCTION</scope>
    <scope>ACTIVITY REGULATION</scope>
    <scope>INTERACTION WITH TLA3 AND TLI3</scope>
    <scope>SUBCELLULAR LOCATION</scope>
    <source>
        <strain>ATCC 15692 / DSM 22644 / CIP 104116 / JCM 14847 / LMG 12228 / 1C / PRS 101 / PAO1</strain>
    </source>
</reference>
<keyword id="KW-1049">Host periplasm</keyword>
<keyword id="KW-1185">Reference proteome</keyword>
<keyword id="KW-0964">Secreted</keyword>
<keyword id="KW-0843">Virulence</keyword>
<sequence>MNDRVRSRTIVSAQSITLPKGGDVHLVPPPPKPCVTIVVHGVNDLAGCYERIERGLCQGLNERLDMPPTLPGGQANPGYLTPAGYSLPADDEGKAENPDVVYYRRKFASGAGGAAVRSVVVPFYWGFREEEQYINKTAAHGEWLDRNGNRLDKSGTKEGGQFVNATTNLPDMWGQGFNGKLFGFISLDWFGGTMTHPLFSAAGRKYMVLAAMRLAMLIKIIRKRYPDDTINVVGHSQGTLLTLLAHAFLKDDGVAPADGVIMLNSPYGLFEPLNEKLQGWSSQQTREARLATLKGILEFICGRRHPVPALSSVALRNCQGYGAIGGPGWVGGQGCQTTIDGERLSFDERDNRGSVYLYFTPQDQTVGLANVQGIGWRGIAEQVKGLPGRTGLPQGFHQRIFTVRKRNGEKEKIGGHAPPHVYPLLLAGEKTWEDTGLGGKDRFGRANFDQGDSVLLTAPRLPLPTEARFDFDGAVTAPGENSASGVYQVRDTLDPIDAAIGVSNGGWKEKDSGHAVAQQVDAALAYRYGRDARSVERALNEGKELAQQTHVFSARELGTGMVLVTRAETPYEARLRLQTAEGHLEPLSFHSAIPNNPEHNRRVLAYDLAIGAGDSVDDVVFYQYLCRVADWRLDWKASDKGIFSQGDASVDLPDEEVRALYRAEESKNSQLIDATVAYRKSGEFPVVVGNRLPSLVGTQTILDRYHEQAVRFGGTI</sequence>
<dbReference type="EMBL" id="AE004091">
    <property type="protein sequence ID" value="AAG03649.1"/>
    <property type="molecule type" value="Genomic_DNA"/>
</dbReference>
<dbReference type="PIR" id="G83612">
    <property type="entry name" value="G83612"/>
</dbReference>
<dbReference type="RefSeq" id="NP_248951.1">
    <property type="nucleotide sequence ID" value="NC_002516.2"/>
</dbReference>
<dbReference type="RefSeq" id="WP_003112695.1">
    <property type="nucleotide sequence ID" value="NZ_QZGE01000024.1"/>
</dbReference>
<dbReference type="SMR" id="Q9I6M9"/>
<dbReference type="IntAct" id="Q9I6M9">
    <property type="interactions" value="2"/>
</dbReference>
<dbReference type="MINT" id="Q9I6M9"/>
<dbReference type="STRING" id="208964.PA0260"/>
<dbReference type="ESTHER" id="pseae-q9i6m9">
    <property type="family name" value="T6SS-TLE3"/>
</dbReference>
<dbReference type="PaxDb" id="208964-PA0260"/>
<dbReference type="GeneID" id="879499"/>
<dbReference type="KEGG" id="pae:PA0260"/>
<dbReference type="PATRIC" id="fig|208964.12.peg.271"/>
<dbReference type="PseudoCAP" id="PA0260"/>
<dbReference type="HOGENOM" id="CLU_018919_1_1_6"/>
<dbReference type="InParanoid" id="Q9I6M9"/>
<dbReference type="OrthoDB" id="8829067at2"/>
<dbReference type="BioCyc" id="PAER208964:G1FZ6-262-MONOMER"/>
<dbReference type="Proteomes" id="UP000002438">
    <property type="component" value="Chromosome"/>
</dbReference>
<dbReference type="GO" id="GO:0005576">
    <property type="term" value="C:extracellular region"/>
    <property type="evidence" value="ECO:0007669"/>
    <property type="project" value="UniProtKB-SubCell"/>
</dbReference>
<dbReference type="GO" id="GO:0044229">
    <property type="term" value="C:host cell periplasmic space"/>
    <property type="evidence" value="ECO:0007669"/>
    <property type="project" value="UniProtKB-SubCell"/>
</dbReference>
<dbReference type="Gene3D" id="3.40.50.1820">
    <property type="entry name" value="alpha/beta hydrolase"/>
    <property type="match status" value="1"/>
</dbReference>
<dbReference type="InterPro" id="IPR029058">
    <property type="entry name" value="AB_hydrolase_fold"/>
</dbReference>
<dbReference type="InterPro" id="IPR056221">
    <property type="entry name" value="Tle3_ab_dom"/>
</dbReference>
<dbReference type="InterPro" id="IPR021692">
    <property type="entry name" value="Tle3_C"/>
</dbReference>
<dbReference type="Pfam" id="PF24322">
    <property type="entry name" value="Tle3"/>
    <property type="match status" value="1"/>
</dbReference>
<dbReference type="Pfam" id="PF11678">
    <property type="entry name" value="Tle3_C"/>
    <property type="match status" value="1"/>
</dbReference>
<dbReference type="SUPFAM" id="SSF53474">
    <property type="entry name" value="alpha/beta-Hydrolases"/>
    <property type="match status" value="1"/>
</dbReference>
<dbReference type="PROSITE" id="PS00120">
    <property type="entry name" value="LIPASE_SER"/>
    <property type="match status" value="1"/>
</dbReference>
<proteinExistence type="evidence at protein level"/>
<comment type="function">
    <text evidence="2">Antibacterial effector (PubMed:31231326). Is toxic once delivered in the periplasm of prey bacteria (PubMed:31231326).</text>
</comment>
<comment type="activity regulation">
    <text evidence="2">Neutralized by the immunity protein Tli3 in the periplasm of P.aeruginosa cells.</text>
</comment>
<comment type="subunit">
    <text evidence="2">Interacts in the cytoplasm with the adapter protein Tla3 (PubMed:31231326). Interacts in the periplasm with the immunity protein Tli3 (PubMed:31231326).</text>
</comment>
<comment type="interaction">
    <interactant intactId="EBI-44433707">
        <id>Q9I6M9</id>
    </interactant>
    <interactant intactId="EBI-44433867">
        <id>Q9I6N0</id>
        <label>tla3</label>
    </interactant>
    <organismsDiffer>false</organismsDiffer>
    <experiments>4</experiments>
</comment>
<comment type="subcellular location">
    <subcellularLocation>
        <location evidence="2">Secreted</location>
    </subcellularLocation>
    <subcellularLocation>
        <location evidence="2">Host periplasm</location>
    </subcellularLocation>
    <text evidence="2">Secreted and translocated into target cells by the H2 type VI (H2-T6SS) secretion system (PubMed:31231326). Is addressed to the H2-T6SS machinery VgrG2b component via the cytoplasmic adapter potein Tla3 (PubMed:31231326).</text>
</comment>
<accession>Q9I6M9</accession>
<feature type="chain" id="PRO_0000460813" description="Antibacterial effector protein Tle3">
    <location>
        <begin position="1"/>
        <end position="716"/>
    </location>
</feature>
<feature type="region of interest" description="Disordered" evidence="1">
    <location>
        <begin position="68"/>
        <end position="87"/>
    </location>
</feature>
<gene>
    <name evidence="3" type="primary">tle3</name>
    <name evidence="5" type="ordered locus">PA0260</name>
</gene>